<name>DPOLA_TRYBB</name>
<sequence length="1339" mass="151613">MEDWVSCRSEEQKRCEEKGQSTFDESEEEQWRRLKEEAMIDSDDSEGAAGDEGAVVLAEAKRRKPRKSGKVIATQKCAQPQNQHRHQQKLTKSLSTYDMENLLKQYRNISAEEEDEVDVDITKFLQDDGVDSEDGEGPSVTATELLSSLISGRSADTNKTEELADSFPLANLNDEVFTYENEAAVKKTPRNKEKRTNKSGANYVIKETVVEELNVVTDLAEVRTGSQHASTDFLNGCPPKALFYWFDAKEQPHTLTAPGTILLFGKVCMNEEDEEFRSCCVRIQHVHRNVFLLPKEGSTDAEVVQEINAICRGSGIEERRIKFVERYYAFEEPGVPREKNRWAKLVYPGRYPPFPNKGGLTHVQVVVGASRSLLELFLIKKRLMGPSYLEIEHLVTAMDRVSHCKTEFLVPSPKDIKVYNSSKPPPPFTVASIQLHAQLDSDGVKNEVIAASIALYGDVSIDGERKPNITECFTGVRQLSPDAPLPLDLETYCLSKRMPGVHRFINERALLTWFAETLAALDPDIIVGHNIIGYTVETLLNRYQELNIVRWSTIGRLDVRRFPRIQGNNFNLAIEKEACVGRLVVDTYLLAREYYKSTNYKLLSLSTQMEIKGITDNRGHFEPGSTVLVKDSMMSSEALCPILLQLLNCAVLSFNVASFLDVIPLTKRLTLLAGNLWSRTLYGARSERIEYLLLHAFHNLKFVTPDKKKRDLKRGREDDDDEGKRKTKYQGGMVLEPKSGLYSEYILLLDFNSLYPSLIQEFNVCYTTIDRDENTVSAEVPPPESLICLSCRAAGLPSPCLHKCILPKVIRGLVDSRREIKRMMKSEKDPGNLAMLEIRQLALKLTANSMYGCLGFEYSRFYAQPLAELVTRQGRLALQNTVELIPQISPSIRVIYGDTDSVMIQTGIKDDIVKVRNLGFEIKGKVNQRYQSLELDIDGVFRAMLLLRKKKYAALSVVDWQGEGKVYKREVKGLDMVRRDWCPLSQHVSDAVLKRILNAEGGEDILDFVIKYMKGVAQDVRSGNVYPLEEFVISKSLTKEPESYHGTGYPHAVVALRMKQRKEGVRVGDLIPYVICEGDEHIDDKAYHIDEVRRSDGLSVDVEWYLSSQLYPPVMRLCEHIQGFVPEQLSEAMCIASHMRTERDVKEEDTANDFSHCSIFKSRALSECFPTATALQVQCTHCQLVVPVDPHKYINDMFSSREKPPPTAPFELYVCFNCGRSLPLAYLANCMTQMCHTIIRQFYCSGGNVASVRALRAQFTYLRAMFDVPQALNCPSAVKNAHRVLSLRCLGTDRKLYTLADVERFPDVEPVDPLLACAESFYRRIDHLFVSLDKLFDTP</sequence>
<protein>
    <recommendedName>
        <fullName>DNA polymerase alpha catalytic subunit</fullName>
        <ecNumber>2.7.7.7</ecNumber>
    </recommendedName>
</protein>
<dbReference type="EC" id="2.7.7.7"/>
<dbReference type="EMBL" id="X60951">
    <property type="protein sequence ID" value="CAA43287.1"/>
    <property type="molecule type" value="Genomic_DNA"/>
</dbReference>
<dbReference type="PIR" id="S20052">
    <property type="entry name" value="S20052"/>
</dbReference>
<dbReference type="SMR" id="P27727"/>
<dbReference type="GO" id="GO:0005658">
    <property type="term" value="C:alpha DNA polymerase:primase complex"/>
    <property type="evidence" value="ECO:0007669"/>
    <property type="project" value="TreeGrafter"/>
</dbReference>
<dbReference type="GO" id="GO:0003682">
    <property type="term" value="F:chromatin binding"/>
    <property type="evidence" value="ECO:0007669"/>
    <property type="project" value="TreeGrafter"/>
</dbReference>
<dbReference type="GO" id="GO:0003688">
    <property type="term" value="F:DNA replication origin binding"/>
    <property type="evidence" value="ECO:0007669"/>
    <property type="project" value="TreeGrafter"/>
</dbReference>
<dbReference type="GO" id="GO:0003887">
    <property type="term" value="F:DNA-directed DNA polymerase activity"/>
    <property type="evidence" value="ECO:0007669"/>
    <property type="project" value="UniProtKB-KW"/>
</dbReference>
<dbReference type="GO" id="GO:0000166">
    <property type="term" value="F:nucleotide binding"/>
    <property type="evidence" value="ECO:0007669"/>
    <property type="project" value="InterPro"/>
</dbReference>
<dbReference type="GO" id="GO:0003697">
    <property type="term" value="F:single-stranded DNA binding"/>
    <property type="evidence" value="ECO:0007669"/>
    <property type="project" value="TreeGrafter"/>
</dbReference>
<dbReference type="GO" id="GO:0008270">
    <property type="term" value="F:zinc ion binding"/>
    <property type="evidence" value="ECO:0007669"/>
    <property type="project" value="UniProtKB-KW"/>
</dbReference>
<dbReference type="GO" id="GO:0006273">
    <property type="term" value="P:lagging strand elongation"/>
    <property type="evidence" value="ECO:0007669"/>
    <property type="project" value="TreeGrafter"/>
</dbReference>
<dbReference type="GO" id="GO:0006272">
    <property type="term" value="P:leading strand elongation"/>
    <property type="evidence" value="ECO:0007669"/>
    <property type="project" value="TreeGrafter"/>
</dbReference>
<dbReference type="GO" id="GO:1902975">
    <property type="term" value="P:mitotic DNA replication initiation"/>
    <property type="evidence" value="ECO:0007669"/>
    <property type="project" value="InterPro"/>
</dbReference>
<dbReference type="CDD" id="cd05776">
    <property type="entry name" value="DNA_polB_alpha_exo"/>
    <property type="match status" value="1"/>
</dbReference>
<dbReference type="CDD" id="cd05532">
    <property type="entry name" value="POLBc_alpha"/>
    <property type="match status" value="1"/>
</dbReference>
<dbReference type="FunFam" id="1.10.132.60:FF:000004">
    <property type="entry name" value="DNA polymerase"/>
    <property type="match status" value="1"/>
</dbReference>
<dbReference type="FunFam" id="3.30.420.10:FF:000187">
    <property type="entry name" value="DNA polymerase"/>
    <property type="match status" value="1"/>
</dbReference>
<dbReference type="FunFam" id="3.30.70.2820:FF:000005">
    <property type="entry name" value="DNA polymerase"/>
    <property type="match status" value="1"/>
</dbReference>
<dbReference type="Gene3D" id="2.40.50.730">
    <property type="match status" value="1"/>
</dbReference>
<dbReference type="Gene3D" id="3.30.70.2820">
    <property type="match status" value="1"/>
</dbReference>
<dbReference type="Gene3D" id="6.10.10.100">
    <property type="match status" value="1"/>
</dbReference>
<dbReference type="Gene3D" id="1.10.132.60">
    <property type="entry name" value="DNA polymerase family B, C-terminal domain"/>
    <property type="match status" value="1"/>
</dbReference>
<dbReference type="Gene3D" id="1.10.287.690">
    <property type="entry name" value="Helix hairpin bin"/>
    <property type="match status" value="1"/>
</dbReference>
<dbReference type="Gene3D" id="3.90.1600.10">
    <property type="entry name" value="Palm domain of DNA polymerase"/>
    <property type="match status" value="1"/>
</dbReference>
<dbReference type="Gene3D" id="3.30.420.10">
    <property type="entry name" value="Ribonuclease H-like superfamily/Ribonuclease H"/>
    <property type="match status" value="1"/>
</dbReference>
<dbReference type="InterPro" id="IPR006172">
    <property type="entry name" value="DNA-dir_DNA_pol_B"/>
</dbReference>
<dbReference type="InterPro" id="IPR017964">
    <property type="entry name" value="DNA-dir_DNA_pol_B_CS"/>
</dbReference>
<dbReference type="InterPro" id="IPR006133">
    <property type="entry name" value="DNA-dir_DNA_pol_B_exonuc"/>
</dbReference>
<dbReference type="InterPro" id="IPR006134">
    <property type="entry name" value="DNA-dir_DNA_pol_B_multi_dom"/>
</dbReference>
<dbReference type="InterPro" id="IPR043502">
    <property type="entry name" value="DNA/RNA_pol_sf"/>
</dbReference>
<dbReference type="InterPro" id="IPR042087">
    <property type="entry name" value="DNA_pol_B_thumb"/>
</dbReference>
<dbReference type="InterPro" id="IPR023211">
    <property type="entry name" value="DNA_pol_palm_dom_sf"/>
</dbReference>
<dbReference type="InterPro" id="IPR045846">
    <property type="entry name" value="POLBc_alpha"/>
</dbReference>
<dbReference type="InterPro" id="IPR012337">
    <property type="entry name" value="RNaseH-like_sf"/>
</dbReference>
<dbReference type="InterPro" id="IPR036397">
    <property type="entry name" value="RNaseH_sf"/>
</dbReference>
<dbReference type="NCBIfam" id="TIGR00592">
    <property type="entry name" value="pol2"/>
    <property type="match status" value="1"/>
</dbReference>
<dbReference type="PANTHER" id="PTHR45861">
    <property type="entry name" value="DNA POLYMERASE ALPHA CATALYTIC SUBUNIT"/>
    <property type="match status" value="1"/>
</dbReference>
<dbReference type="PANTHER" id="PTHR45861:SF1">
    <property type="entry name" value="DNA POLYMERASE ALPHA CATALYTIC SUBUNIT"/>
    <property type="match status" value="1"/>
</dbReference>
<dbReference type="Pfam" id="PF00136">
    <property type="entry name" value="DNA_pol_B"/>
    <property type="match status" value="1"/>
</dbReference>
<dbReference type="Pfam" id="PF03104">
    <property type="entry name" value="DNA_pol_B_exo1"/>
    <property type="match status" value="1"/>
</dbReference>
<dbReference type="PRINTS" id="PR00106">
    <property type="entry name" value="DNAPOLB"/>
</dbReference>
<dbReference type="SMART" id="SM00486">
    <property type="entry name" value="POLBc"/>
    <property type="match status" value="1"/>
</dbReference>
<dbReference type="SUPFAM" id="SSF56672">
    <property type="entry name" value="DNA/RNA polymerases"/>
    <property type="match status" value="1"/>
</dbReference>
<dbReference type="SUPFAM" id="SSF53098">
    <property type="entry name" value="Ribonuclease H-like"/>
    <property type="match status" value="1"/>
</dbReference>
<dbReference type="PROSITE" id="PS00116">
    <property type="entry name" value="DNA_POLYMERASE_B"/>
    <property type="match status" value="1"/>
</dbReference>
<reference key="1">
    <citation type="journal article" date="1991" name="Nucleic Acids Res.">
        <title>The Trypanosoma brucei DNA polymerase alpha core subunit gene is developmentally regulated and linked to a constitutively expressed open reading frame.</title>
        <authorList>
            <person name="Leegwater P.A.J."/>
            <person name="Strating M.S."/>
            <person name="Murphy N.B."/>
            <person name="Kooy R.F."/>
            <person name="van der Vliet P.C."/>
            <person name="Overdulve J.P."/>
        </authorList>
    </citation>
    <scope>NUCLEOTIDE SEQUENCE [GENOMIC DNA]</scope>
    <source>
        <strain>S427</strain>
    </source>
</reference>
<keyword id="KW-0235">DNA replication</keyword>
<keyword id="KW-0238">DNA-binding</keyword>
<keyword id="KW-0239">DNA-directed DNA polymerase</keyword>
<keyword id="KW-0479">Metal-binding</keyword>
<keyword id="KW-0548">Nucleotidyltransferase</keyword>
<keyword id="KW-0539">Nucleus</keyword>
<keyword id="KW-0808">Transferase</keyword>
<keyword id="KW-0862">Zinc</keyword>
<keyword id="KW-0863">Zinc-finger</keyword>
<feature type="chain" id="PRO_0000046436" description="DNA polymerase alpha catalytic subunit">
    <location>
        <begin position="1"/>
        <end position="1339"/>
    </location>
</feature>
<feature type="zinc finger region" description="CysA-type">
    <location>
        <begin position="1179"/>
        <end position="1218"/>
    </location>
</feature>
<feature type="region of interest" description="Disordered" evidence="3">
    <location>
        <begin position="1"/>
        <end position="29"/>
    </location>
</feature>
<feature type="region of interest" description="Disordered" evidence="3">
    <location>
        <begin position="60"/>
        <end position="89"/>
    </location>
</feature>
<feature type="short sequence motif" description="CysB motif">
    <location>
        <begin position="1244"/>
        <end position="1274"/>
    </location>
</feature>
<feature type="compositionally biased region" description="Basic and acidic residues" evidence="3">
    <location>
        <begin position="8"/>
        <end position="19"/>
    </location>
</feature>
<feature type="binding site" evidence="1">
    <location>
        <position position="1179"/>
    </location>
    <ligand>
        <name>Zn(2+)</name>
        <dbReference type="ChEBI" id="CHEBI:29105"/>
        <label>1</label>
    </ligand>
</feature>
<feature type="binding site" evidence="1">
    <location>
        <position position="1182"/>
    </location>
    <ligand>
        <name>Zn(2+)</name>
        <dbReference type="ChEBI" id="CHEBI:29105"/>
        <label>1</label>
    </ligand>
</feature>
<feature type="binding site" evidence="1">
    <location>
        <position position="1215"/>
    </location>
    <ligand>
        <name>Zn(2+)</name>
        <dbReference type="ChEBI" id="CHEBI:29105"/>
        <label>1</label>
    </ligand>
</feature>
<feature type="binding site" evidence="4">
    <location>
        <position position="1218"/>
    </location>
    <ligand>
        <name>Zn(2+)</name>
        <dbReference type="ChEBI" id="CHEBI:29105"/>
        <label>1</label>
    </ligand>
</feature>
<feature type="binding site" evidence="2">
    <location>
        <position position="1235"/>
    </location>
    <ligand>
        <name>Zn(2+)</name>
        <dbReference type="ChEBI" id="CHEBI:29105"/>
        <label>2</label>
    </ligand>
</feature>
<feature type="binding site" evidence="4">
    <location>
        <position position="1244"/>
    </location>
    <ligand>
        <name>Zn(2+)</name>
        <dbReference type="ChEBI" id="CHEBI:29105"/>
        <label>2</label>
    </ligand>
</feature>
<feature type="binding site" evidence="1">
    <location>
        <position position="1274"/>
    </location>
    <ligand>
        <name>Zn(2+)</name>
        <dbReference type="ChEBI" id="CHEBI:29105"/>
        <label>2</label>
    </ligand>
</feature>
<feature type="binding site" evidence="4">
    <location>
        <position position="1289"/>
    </location>
    <ligand>
        <name>Zn(2+)</name>
        <dbReference type="ChEBI" id="CHEBI:29105"/>
        <label>2</label>
    </ligand>
</feature>
<proteinExistence type="inferred from homology"/>
<evidence type="ECO:0000250" key="1">
    <source>
        <dbReference type="UniProtKB" id="P09884"/>
    </source>
</evidence>
<evidence type="ECO:0000250" key="2">
    <source>
        <dbReference type="UniProtKB" id="P13382"/>
    </source>
</evidence>
<evidence type="ECO:0000256" key="3">
    <source>
        <dbReference type="SAM" id="MobiDB-lite"/>
    </source>
</evidence>
<evidence type="ECO:0000305" key="4"/>
<organism>
    <name type="scientific">Trypanosoma brucei brucei</name>
    <dbReference type="NCBI Taxonomy" id="5702"/>
    <lineage>
        <taxon>Eukaryota</taxon>
        <taxon>Discoba</taxon>
        <taxon>Euglenozoa</taxon>
        <taxon>Kinetoplastea</taxon>
        <taxon>Metakinetoplastina</taxon>
        <taxon>Trypanosomatida</taxon>
        <taxon>Trypanosomatidae</taxon>
        <taxon>Trypanosoma</taxon>
    </lineage>
</organism>
<accession>P27727</accession>
<comment type="function">
    <text>Polymerase alpha in a complex with DNA primase is a replicative polymerase.</text>
</comment>
<comment type="catalytic activity">
    <reaction>
        <text>DNA(n) + a 2'-deoxyribonucleoside 5'-triphosphate = DNA(n+1) + diphosphate</text>
        <dbReference type="Rhea" id="RHEA:22508"/>
        <dbReference type="Rhea" id="RHEA-COMP:17339"/>
        <dbReference type="Rhea" id="RHEA-COMP:17340"/>
        <dbReference type="ChEBI" id="CHEBI:33019"/>
        <dbReference type="ChEBI" id="CHEBI:61560"/>
        <dbReference type="ChEBI" id="CHEBI:173112"/>
        <dbReference type="EC" id="2.7.7.7"/>
    </reaction>
</comment>
<comment type="subcellular location">
    <subcellularLocation>
        <location>Nucleus</location>
    </subcellularLocation>
</comment>
<comment type="miscellaneous">
    <text>In eukaryotes there are five DNA polymerases: alpha, beta, gamma, delta, and epsilon which are responsible for different reactions of DNA synthesis.</text>
</comment>
<comment type="similarity">
    <text evidence="4">Belongs to the DNA polymerase type-B family.</text>
</comment>